<organism>
    <name type="scientific">Acanthamoeba polyphaga mimivirus</name>
    <name type="common">APMV</name>
    <dbReference type="NCBI Taxonomy" id="212035"/>
    <lineage>
        <taxon>Viruses</taxon>
        <taxon>Varidnaviria</taxon>
        <taxon>Bamfordvirae</taxon>
        <taxon>Nucleocytoviricota</taxon>
        <taxon>Megaviricetes</taxon>
        <taxon>Imitervirales</taxon>
        <taxon>Mimiviridae</taxon>
        <taxon>Megamimivirinae</taxon>
        <taxon>Mimivirus</taxon>
        <taxon>Mimivirus bradfordmassiliense</taxon>
    </lineage>
</organism>
<keyword id="KW-1185">Reference proteome</keyword>
<accession>Q5UPS0</accession>
<proteinExistence type="predicted"/>
<sequence length="108" mass="12882">MVKIEIYYYQKKFDTDNEHAFIFGSKSYTKVYEYTDDTQTNYKDILELIFEKFNNTDNPLKSLDNQKIIRNNKLHTSMSVDDIVKIDNNYYIVDIIGFKSINTNDINQ</sequence>
<gene>
    <name type="ordered locus">MIMI_R785</name>
</gene>
<feature type="chain" id="PRO_0000071352" description="Uncharacterized protein R785">
    <location>
        <begin position="1"/>
        <end position="108"/>
    </location>
</feature>
<organismHost>
    <name type="scientific">Acanthamoeba polyphaga</name>
    <name type="common">Amoeba</name>
    <dbReference type="NCBI Taxonomy" id="5757"/>
</organismHost>
<reference key="1">
    <citation type="journal article" date="2004" name="Science">
        <title>The 1.2-megabase genome sequence of Mimivirus.</title>
        <authorList>
            <person name="Raoult D."/>
            <person name="Audic S."/>
            <person name="Robert C."/>
            <person name="Abergel C."/>
            <person name="Renesto P."/>
            <person name="Ogata H."/>
            <person name="La Scola B."/>
            <person name="Susan M."/>
            <person name="Claverie J.-M."/>
        </authorList>
    </citation>
    <scope>NUCLEOTIDE SEQUENCE [LARGE SCALE GENOMIC DNA]</scope>
    <source>
        <strain>Rowbotham-Bradford</strain>
    </source>
</reference>
<name>YR785_MIMIV</name>
<protein>
    <recommendedName>
        <fullName>Uncharacterized protein R785</fullName>
    </recommendedName>
</protein>
<dbReference type="EMBL" id="AY653733">
    <property type="protein sequence ID" value="AAV51045.1"/>
    <property type="molecule type" value="Genomic_DNA"/>
</dbReference>
<dbReference type="KEGG" id="vg:9925446"/>
<dbReference type="OrthoDB" id="39101at10239"/>
<dbReference type="Proteomes" id="UP000001134">
    <property type="component" value="Genome"/>
</dbReference>